<comment type="function">
    <text evidence="1">Bifunctional serine/threonine kinase and phosphorylase involved in the regulation of the pyruvate, phosphate dikinase (PPDK) by catalyzing its phosphorylation/dephosphorylation.</text>
</comment>
<comment type="catalytic activity">
    <reaction evidence="1">
        <text>N(tele)-phospho-L-histidyl/L-threonyl-[pyruvate, phosphate dikinase] + ADP = N(tele)-phospho-L-histidyl/O-phospho-L-threonyl-[pyruvate, phosphate dikinase] + AMP + H(+)</text>
        <dbReference type="Rhea" id="RHEA:43692"/>
        <dbReference type="Rhea" id="RHEA-COMP:10650"/>
        <dbReference type="Rhea" id="RHEA-COMP:10651"/>
        <dbReference type="ChEBI" id="CHEBI:15378"/>
        <dbReference type="ChEBI" id="CHEBI:30013"/>
        <dbReference type="ChEBI" id="CHEBI:61977"/>
        <dbReference type="ChEBI" id="CHEBI:83586"/>
        <dbReference type="ChEBI" id="CHEBI:456215"/>
        <dbReference type="ChEBI" id="CHEBI:456216"/>
        <dbReference type="EC" id="2.7.11.32"/>
    </reaction>
</comment>
<comment type="catalytic activity">
    <reaction evidence="1">
        <text>N(tele)-phospho-L-histidyl/O-phospho-L-threonyl-[pyruvate, phosphate dikinase] + phosphate + H(+) = N(tele)-phospho-L-histidyl/L-threonyl-[pyruvate, phosphate dikinase] + diphosphate</text>
        <dbReference type="Rhea" id="RHEA:43696"/>
        <dbReference type="Rhea" id="RHEA-COMP:10650"/>
        <dbReference type="Rhea" id="RHEA-COMP:10651"/>
        <dbReference type="ChEBI" id="CHEBI:15378"/>
        <dbReference type="ChEBI" id="CHEBI:30013"/>
        <dbReference type="ChEBI" id="CHEBI:33019"/>
        <dbReference type="ChEBI" id="CHEBI:43474"/>
        <dbReference type="ChEBI" id="CHEBI:61977"/>
        <dbReference type="ChEBI" id="CHEBI:83586"/>
        <dbReference type="EC" id="2.7.4.27"/>
    </reaction>
</comment>
<comment type="similarity">
    <text evidence="1">Belongs to the pyruvate, phosphate/water dikinase regulatory protein family. PDRP subfamily.</text>
</comment>
<protein>
    <recommendedName>
        <fullName evidence="1">Putative pyruvate, phosphate dikinase regulatory protein</fullName>
        <shortName evidence="1">PPDK regulatory protein</shortName>
        <ecNumber evidence="1">2.7.11.32</ecNumber>
        <ecNumber evidence="1">2.7.4.27</ecNumber>
    </recommendedName>
</protein>
<name>PDRP_BARHE</name>
<dbReference type="EC" id="2.7.11.32" evidence="1"/>
<dbReference type="EC" id="2.7.4.27" evidence="1"/>
<dbReference type="EMBL" id="BX897699">
    <property type="protein sequence ID" value="CAF26817.1"/>
    <property type="molecule type" value="Genomic_DNA"/>
</dbReference>
<dbReference type="RefSeq" id="WP_011179971.1">
    <property type="nucleotide sequence ID" value="NZ_LRIJ02000001.1"/>
</dbReference>
<dbReference type="SMR" id="Q6G5B1"/>
<dbReference type="PaxDb" id="283166-BH00010"/>
<dbReference type="EnsemblBacteria" id="CAF26817">
    <property type="protein sequence ID" value="CAF26817"/>
    <property type="gene ID" value="BH00010"/>
</dbReference>
<dbReference type="KEGG" id="bhe:BH00010"/>
<dbReference type="eggNOG" id="COG1806">
    <property type="taxonomic scope" value="Bacteria"/>
</dbReference>
<dbReference type="OrthoDB" id="9782201at2"/>
<dbReference type="Proteomes" id="UP000000421">
    <property type="component" value="Chromosome"/>
</dbReference>
<dbReference type="GO" id="GO:0043531">
    <property type="term" value="F:ADP binding"/>
    <property type="evidence" value="ECO:0007669"/>
    <property type="project" value="UniProtKB-UniRule"/>
</dbReference>
<dbReference type="GO" id="GO:0005524">
    <property type="term" value="F:ATP binding"/>
    <property type="evidence" value="ECO:0007669"/>
    <property type="project" value="InterPro"/>
</dbReference>
<dbReference type="GO" id="GO:0016776">
    <property type="term" value="F:phosphotransferase activity, phosphate group as acceptor"/>
    <property type="evidence" value="ECO:0007669"/>
    <property type="project" value="UniProtKB-UniRule"/>
</dbReference>
<dbReference type="GO" id="GO:0004674">
    <property type="term" value="F:protein serine/threonine kinase activity"/>
    <property type="evidence" value="ECO:0007669"/>
    <property type="project" value="UniProtKB-UniRule"/>
</dbReference>
<dbReference type="HAMAP" id="MF_00921">
    <property type="entry name" value="PDRP"/>
    <property type="match status" value="1"/>
</dbReference>
<dbReference type="InterPro" id="IPR005177">
    <property type="entry name" value="Kinase-pyrophosphorylase"/>
</dbReference>
<dbReference type="InterPro" id="IPR026565">
    <property type="entry name" value="PPDK_reg"/>
</dbReference>
<dbReference type="NCBIfam" id="NF003742">
    <property type="entry name" value="PRK05339.1"/>
    <property type="match status" value="1"/>
</dbReference>
<dbReference type="PANTHER" id="PTHR31756">
    <property type="entry name" value="PYRUVATE, PHOSPHATE DIKINASE REGULATORY PROTEIN 1, CHLOROPLASTIC"/>
    <property type="match status" value="1"/>
</dbReference>
<dbReference type="PANTHER" id="PTHR31756:SF3">
    <property type="entry name" value="PYRUVATE, PHOSPHATE DIKINASE REGULATORY PROTEIN 1, CHLOROPLASTIC"/>
    <property type="match status" value="1"/>
</dbReference>
<dbReference type="Pfam" id="PF03618">
    <property type="entry name" value="Kinase-PPPase"/>
    <property type="match status" value="1"/>
</dbReference>
<reference key="1">
    <citation type="journal article" date="2004" name="Proc. Natl. Acad. Sci. U.S.A.">
        <title>The louse-borne human pathogen Bartonella quintana is a genomic derivative of the zoonotic agent Bartonella henselae.</title>
        <authorList>
            <person name="Alsmark U.C.M."/>
            <person name="Frank A.C."/>
            <person name="Karlberg E.O."/>
            <person name="Legault B.-A."/>
            <person name="Ardell D.H."/>
            <person name="Canbaeck B."/>
            <person name="Eriksson A.-S."/>
            <person name="Naeslund A.K."/>
            <person name="Handley S.A."/>
            <person name="Huvet M."/>
            <person name="La Scola B."/>
            <person name="Holmberg M."/>
            <person name="Andersson S.G.E."/>
        </authorList>
    </citation>
    <scope>NUCLEOTIDE SEQUENCE [LARGE SCALE GENOMIC DNA]</scope>
    <source>
        <strain>ATCC 49882 / DSM 28221 / CCUG 30454 / Houston 1</strain>
    </source>
</reference>
<gene>
    <name type="ordered locus">BH00010</name>
</gene>
<feature type="chain" id="PRO_0000196632" description="Putative pyruvate, phosphate dikinase regulatory protein">
    <location>
        <begin position="1"/>
        <end position="274"/>
    </location>
</feature>
<feature type="binding site" evidence="1">
    <location>
        <begin position="153"/>
        <end position="160"/>
    </location>
    <ligand>
        <name>ADP</name>
        <dbReference type="ChEBI" id="CHEBI:456216"/>
    </ligand>
</feature>
<accession>Q6G5B1</accession>
<evidence type="ECO:0000255" key="1">
    <source>
        <dbReference type="HAMAP-Rule" id="MF_00921"/>
    </source>
</evidence>
<proteinExistence type="inferred from homology"/>
<organism>
    <name type="scientific">Bartonella henselae (strain ATCC 49882 / DSM 28221 / CCUG 30454 / Houston 1)</name>
    <name type="common">Rochalimaea henselae</name>
    <dbReference type="NCBI Taxonomy" id="283166"/>
    <lineage>
        <taxon>Bacteria</taxon>
        <taxon>Pseudomonadati</taxon>
        <taxon>Pseudomonadota</taxon>
        <taxon>Alphaproteobacteria</taxon>
        <taxon>Hyphomicrobiales</taxon>
        <taxon>Bartonellaceae</taxon>
        <taxon>Bartonella</taxon>
    </lineage>
</organism>
<sequence length="274" mass="31016">MKREKKSFHLHMLSDATGETLISVGRAVASQYTMSQATEHIYPMIRNKTQLQRALDEIQQEPGIVLYTIIDKKIKILLRKRCEKIEIPCIDILHPVLNAFKSYLGIPTNLRVSAQHGLNADYFRRIEALDFTIEHDDGQSPNSLSDADVILVGISRTSKTPTSIYLANRGIKTANVPLIPGINLPDTLLGAKNALIIGLIASVERISHIRQNRNLGDDFSLESYTDRINISEELTYAKRICERFSWPVIDVTRRSIEETAAEIFELLSRFREGK</sequence>
<keyword id="KW-0418">Kinase</keyword>
<keyword id="KW-0547">Nucleotide-binding</keyword>
<keyword id="KW-0723">Serine/threonine-protein kinase</keyword>
<keyword id="KW-0808">Transferase</keyword>